<sequence>MAVLKLCEQPPLVQAIFSGDPEEIRMLIHKTEDVNALDSEKRTPLHVAAFLGDAEIIELLILSGARVNAKDNMWLTPLHRAVASRSEEAVQVLIKHSADVNARDKNWQTPLHVAAANKAVKCAEVIIPLLSSVNVSDRGGRTALHHAALNGHMEMVNLLLAKGANINAFDKKDRRALHWAAYMGHLDVVALLINHGAEVTCKDKKGYTPLHAAASNGQISVVKHLLNLGVEIDEINVYGNTALHIACYNGQDAVVNELIDYGANVNQPNNSGFTPLHFAAASTHGALCLELLVNNGADVNIQSKDGKSPLHMTAVHGRFTRSQTLIQNGGEIDCVDKDGNTPLHVAARHGHELLINTLITSGADTAKCGIHSMFPLHLAALNAHSDCCRKLLSSGFEIDTPDTFGRTCLHAAAAGGNVECIKLLQSSGADFHKKDKCGRTPLHYAAANCHFHCIKALVTTGANVNETDDWGRTALHYAAASDMDRNKMILGNAHDNSEELERAREVKEKDAALCLEFLLQNDANPSIRDKEGYNSIHYAAAYGHRQCLELLLERTNTGFEESDGGALKSPLHLAAYNGHHQALEVLLQSLVDLDIRDEKGRTALYLAAFKGHTECVEALVNQGASIFVKDNVTKRTPLHASVINGHTLCLRLLLETADNPEVVDVKDAKGQTPLMLAVAYGHIDAVSLLLEKEANVDAVDIVGCTALHRGIMTGHEECVQMLLEQEASILCKDSRGRTPLHYAAARGHATWLNELLQIALSEEDCCLKDNQGYTPLHWACYNGNENCIEVLLEQKCFRKFIGNPFTPLHCAIINGHESCASLLLGAIDPSIVSCRDDKGRTTLHAAAFGDHAECLQLLLRHDAQVNAVDNSGKTALMMAAENGQAGAVDILVNSAQADLTVKDKDLNTPLHLAISKGHEKCALLILDKIQDESLINAKNSALQTPLHIAARNGLKVVVEELLAKGACVLAVDENASRSNGPRSPPGTAVRKEE</sequence>
<evidence type="ECO:0000250" key="1"/>
<evidence type="ECO:0000256" key="2">
    <source>
        <dbReference type="SAM" id="MobiDB-lite"/>
    </source>
</evidence>
<evidence type="ECO:0000305" key="3"/>
<protein>
    <recommendedName>
        <fullName>Serine/threonine-protein phosphatase 6 regulatory ankyrin repeat subunit B</fullName>
        <shortName>PP6-ARS-B</shortName>
        <shortName>Serine/threonine-protein phosphatase 6 regulatory subunit ARS-B</shortName>
    </recommendedName>
    <alternativeName>
        <fullName>Ankyrin repeat domain-containing protein 44</fullName>
    </alternativeName>
</protein>
<dbReference type="EMBL" id="BC157918">
    <property type="protein sequence ID" value="AAI57919.1"/>
    <property type="molecule type" value="mRNA"/>
</dbReference>
<dbReference type="EMBL" id="BC157951">
    <property type="protein sequence ID" value="AAI57952.1"/>
    <property type="molecule type" value="mRNA"/>
</dbReference>
<dbReference type="EMBL" id="BC172102">
    <property type="protein sequence ID" value="AAI72102.1"/>
    <property type="molecule type" value="mRNA"/>
</dbReference>
<dbReference type="CCDS" id="CCDS35566.2"/>
<dbReference type="RefSeq" id="NP_001074902.2">
    <property type="nucleotide sequence ID" value="NM_001081433.3"/>
</dbReference>
<dbReference type="SMR" id="B2RXR6"/>
<dbReference type="BioGRID" id="236716">
    <property type="interactions" value="2"/>
</dbReference>
<dbReference type="FunCoup" id="B2RXR6">
    <property type="interactions" value="282"/>
</dbReference>
<dbReference type="IntAct" id="B2RXR6">
    <property type="interactions" value="8"/>
</dbReference>
<dbReference type="MINT" id="B2RXR6"/>
<dbReference type="STRING" id="10090.ENSMUSP00000137616"/>
<dbReference type="iPTMnet" id="B2RXR6"/>
<dbReference type="PhosphoSitePlus" id="B2RXR6"/>
<dbReference type="PaxDb" id="10090-ENSMUSP00000040327"/>
<dbReference type="PeptideAtlas" id="B2RXR6"/>
<dbReference type="ProteomicsDB" id="282120"/>
<dbReference type="Pumba" id="B2RXR6"/>
<dbReference type="Antibodypedia" id="34063">
    <property type="antibodies" value="87 antibodies from 17 providers"/>
</dbReference>
<dbReference type="Ensembl" id="ENSMUST00000179030.8">
    <property type="protein sequence ID" value="ENSMUSP00000137616.2"/>
    <property type="gene ID" value="ENSMUSG00000052331.15"/>
</dbReference>
<dbReference type="GeneID" id="329154"/>
<dbReference type="KEGG" id="mmu:329154"/>
<dbReference type="UCSC" id="uc011wkz.1">
    <property type="organism name" value="mouse"/>
</dbReference>
<dbReference type="AGR" id="MGI:3045243"/>
<dbReference type="CTD" id="91526"/>
<dbReference type="MGI" id="MGI:3045243">
    <property type="gene designation" value="Ankrd44"/>
</dbReference>
<dbReference type="VEuPathDB" id="HostDB:ENSMUSG00000052331"/>
<dbReference type="eggNOG" id="KOG0504">
    <property type="taxonomic scope" value="Eukaryota"/>
</dbReference>
<dbReference type="eggNOG" id="KOG4177">
    <property type="taxonomic scope" value="Eukaryota"/>
</dbReference>
<dbReference type="GeneTree" id="ENSGT00950000182908"/>
<dbReference type="InParanoid" id="B2RXR6"/>
<dbReference type="OMA" id="KCFRKFV"/>
<dbReference type="OrthoDB" id="10258888at2759"/>
<dbReference type="PhylomeDB" id="B2RXR6"/>
<dbReference type="BioGRID-ORCS" id="329154">
    <property type="hits" value="2 hits in 76 CRISPR screens"/>
</dbReference>
<dbReference type="ChiTaRS" id="Ankrd44">
    <property type="organism name" value="mouse"/>
</dbReference>
<dbReference type="PRO" id="PR:B2RXR6"/>
<dbReference type="Proteomes" id="UP000000589">
    <property type="component" value="Chromosome 1"/>
</dbReference>
<dbReference type="RNAct" id="B2RXR6">
    <property type="molecule type" value="protein"/>
</dbReference>
<dbReference type="Bgee" id="ENSMUSG00000052331">
    <property type="expression patterns" value="Expressed in animal zygote and 236 other cell types or tissues"/>
</dbReference>
<dbReference type="ExpressionAtlas" id="B2RXR6">
    <property type="expression patterns" value="baseline and differential"/>
</dbReference>
<dbReference type="Gene3D" id="1.25.40.20">
    <property type="entry name" value="Ankyrin repeat-containing domain"/>
    <property type="match status" value="9"/>
</dbReference>
<dbReference type="InterPro" id="IPR002110">
    <property type="entry name" value="Ankyrin_rpt"/>
</dbReference>
<dbReference type="InterPro" id="IPR036770">
    <property type="entry name" value="Ankyrin_rpt-contain_sf"/>
</dbReference>
<dbReference type="PANTHER" id="PTHR24178:SF21">
    <property type="entry name" value="ANKYRIN REPEAT DOMAIN 52-RELATED"/>
    <property type="match status" value="1"/>
</dbReference>
<dbReference type="PANTHER" id="PTHR24178">
    <property type="entry name" value="MOLTING PROTEIN MLT-4"/>
    <property type="match status" value="1"/>
</dbReference>
<dbReference type="Pfam" id="PF00023">
    <property type="entry name" value="Ank"/>
    <property type="match status" value="3"/>
</dbReference>
<dbReference type="Pfam" id="PF12796">
    <property type="entry name" value="Ank_2"/>
    <property type="match status" value="8"/>
</dbReference>
<dbReference type="Pfam" id="PF13637">
    <property type="entry name" value="Ank_4"/>
    <property type="match status" value="2"/>
</dbReference>
<dbReference type="PRINTS" id="PR01415">
    <property type="entry name" value="ANKYRIN"/>
</dbReference>
<dbReference type="SMART" id="SM00248">
    <property type="entry name" value="ANK"/>
    <property type="match status" value="28"/>
</dbReference>
<dbReference type="SUPFAM" id="SSF48403">
    <property type="entry name" value="Ankyrin repeat"/>
    <property type="match status" value="4"/>
</dbReference>
<dbReference type="PROSITE" id="PS50297">
    <property type="entry name" value="ANK_REP_REGION"/>
    <property type="match status" value="1"/>
</dbReference>
<dbReference type="PROSITE" id="PS50088">
    <property type="entry name" value="ANK_REPEAT"/>
    <property type="match status" value="23"/>
</dbReference>
<accession>B2RXR6</accession>
<accession>B2RXN6</accession>
<accession>B7ZWK8</accession>
<keyword id="KW-0040">ANK repeat</keyword>
<keyword id="KW-1185">Reference proteome</keyword>
<keyword id="KW-0677">Repeat</keyword>
<feature type="chain" id="PRO_0000355975" description="Serine/threonine-protein phosphatase 6 regulatory ankyrin repeat subunit B">
    <location>
        <begin position="1"/>
        <end position="993"/>
    </location>
</feature>
<feature type="repeat" description="ANK 1">
    <location>
        <begin position="7"/>
        <end position="36"/>
    </location>
</feature>
<feature type="repeat" description="ANK 2">
    <location>
        <begin position="40"/>
        <end position="69"/>
    </location>
</feature>
<feature type="repeat" description="ANK 3">
    <location>
        <begin position="73"/>
        <end position="102"/>
    </location>
</feature>
<feature type="repeat" description="ANK 4">
    <location>
        <begin position="106"/>
        <end position="135"/>
    </location>
</feature>
<feature type="repeat" description="ANK 5">
    <location>
        <begin position="139"/>
        <end position="168"/>
    </location>
</feature>
<feature type="repeat" description="ANK 6">
    <location>
        <begin position="172"/>
        <end position="201"/>
    </location>
</feature>
<feature type="repeat" description="ANK 7">
    <location>
        <begin position="205"/>
        <end position="234"/>
    </location>
</feature>
<feature type="repeat" description="ANK 8">
    <location>
        <begin position="238"/>
        <end position="267"/>
    </location>
</feature>
<feature type="repeat" description="ANK 9">
    <location>
        <begin position="271"/>
        <end position="301"/>
    </location>
</feature>
<feature type="repeat" description="ANK 10">
    <location>
        <begin position="305"/>
        <end position="334"/>
    </location>
</feature>
<feature type="repeat" description="ANK 11">
    <location>
        <begin position="338"/>
        <end position="367"/>
    </location>
</feature>
<feature type="repeat" description="ANK 12">
    <location>
        <begin position="371"/>
        <end position="400"/>
    </location>
</feature>
<feature type="repeat" description="ANK 13">
    <location>
        <begin position="404"/>
        <end position="433"/>
    </location>
</feature>
<feature type="repeat" description="ANK 14">
    <location>
        <begin position="437"/>
        <end position="466"/>
    </location>
</feature>
<feature type="repeat" description="ANK 15">
    <location>
        <begin position="470"/>
        <end position="498"/>
    </location>
</feature>
<feature type="repeat" description="ANK 16">
    <location>
        <begin position="531"/>
        <end position="561"/>
    </location>
</feature>
<feature type="repeat" description="ANK 17">
    <location>
        <begin position="566"/>
        <end position="595"/>
    </location>
</feature>
<feature type="repeat" description="ANK 18">
    <location>
        <begin position="599"/>
        <end position="628"/>
    </location>
</feature>
<feature type="repeat" description="ANK 19">
    <location>
        <begin position="633"/>
        <end position="662"/>
    </location>
</feature>
<feature type="repeat" description="ANK 20">
    <location>
        <begin position="669"/>
        <end position="698"/>
    </location>
</feature>
<feature type="repeat" description="ANK 21">
    <location>
        <begin position="702"/>
        <end position="731"/>
    </location>
</feature>
<feature type="repeat" description="ANK 22">
    <location>
        <begin position="735"/>
        <end position="764"/>
    </location>
</feature>
<feature type="repeat" description="ANK 23">
    <location>
        <begin position="771"/>
        <end position="800"/>
    </location>
</feature>
<feature type="repeat" description="ANK 24">
    <location>
        <begin position="803"/>
        <end position="832"/>
    </location>
</feature>
<feature type="repeat" description="ANK 25">
    <location>
        <begin position="838"/>
        <end position="867"/>
    </location>
</feature>
<feature type="repeat" description="ANK 26">
    <location>
        <begin position="871"/>
        <end position="901"/>
    </location>
</feature>
<feature type="repeat" description="ANK 27">
    <location>
        <begin position="905"/>
        <end position="934"/>
    </location>
</feature>
<feature type="repeat" description="ANK 28">
    <location>
        <begin position="941"/>
        <end position="970"/>
    </location>
</feature>
<feature type="region of interest" description="Disordered" evidence="2">
    <location>
        <begin position="974"/>
        <end position="993"/>
    </location>
</feature>
<feature type="sequence conflict" description="In Ref. 1; AAI57919." evidence="3" ref="1">
    <original>S</original>
    <variation>L</variation>
    <location>
        <position position="63"/>
    </location>
</feature>
<comment type="function">
    <text evidence="1">Putative regulatory subunit of protein phosphatase 6 (PP6) that may be involved in the recognition of phosphoprotein substrates.</text>
</comment>
<comment type="subunit">
    <text evidence="1">Protein phosphatase 6 (PP6) holoenzyme is proposed to be a heterotrimeric complex formed by the catalytic subunit, a SAPS domain-containing subunit (PP6R) and an ankyrin repeat-domain containing regulatory subunit (ARS). Interacts with PPP6R1 (By similarity).</text>
</comment>
<organism>
    <name type="scientific">Mus musculus</name>
    <name type="common">Mouse</name>
    <dbReference type="NCBI Taxonomy" id="10090"/>
    <lineage>
        <taxon>Eukaryota</taxon>
        <taxon>Metazoa</taxon>
        <taxon>Chordata</taxon>
        <taxon>Craniata</taxon>
        <taxon>Vertebrata</taxon>
        <taxon>Euteleostomi</taxon>
        <taxon>Mammalia</taxon>
        <taxon>Eutheria</taxon>
        <taxon>Euarchontoglires</taxon>
        <taxon>Glires</taxon>
        <taxon>Rodentia</taxon>
        <taxon>Myomorpha</taxon>
        <taxon>Muroidea</taxon>
        <taxon>Muridae</taxon>
        <taxon>Murinae</taxon>
        <taxon>Mus</taxon>
        <taxon>Mus</taxon>
    </lineage>
</organism>
<gene>
    <name type="primary">Ankrd44</name>
</gene>
<proteinExistence type="evidence at protein level"/>
<reference key="1">
    <citation type="journal article" date="2004" name="Genome Res.">
        <title>The status, quality, and expansion of the NIH full-length cDNA project: the Mammalian Gene Collection (MGC).</title>
        <authorList>
            <consortium name="The MGC Project Team"/>
        </authorList>
    </citation>
    <scope>NUCLEOTIDE SEQUENCE [LARGE SCALE MRNA]</scope>
    <source>
        <tissue>Brain</tissue>
    </source>
</reference>
<reference key="2">
    <citation type="journal article" date="2010" name="Cell">
        <title>A tissue-specific atlas of mouse protein phosphorylation and expression.</title>
        <authorList>
            <person name="Huttlin E.L."/>
            <person name="Jedrychowski M.P."/>
            <person name="Elias J.E."/>
            <person name="Goswami T."/>
            <person name="Rad R."/>
            <person name="Beausoleil S.A."/>
            <person name="Villen J."/>
            <person name="Haas W."/>
            <person name="Sowa M.E."/>
            <person name="Gygi S.P."/>
        </authorList>
    </citation>
    <scope>IDENTIFICATION BY MASS SPECTROMETRY [LARGE SCALE ANALYSIS]</scope>
    <source>
        <tissue>Brown adipose tissue</tissue>
        <tissue>Heart</tissue>
        <tissue>Liver</tissue>
        <tissue>Lung</tissue>
        <tissue>Spleen</tissue>
        <tissue>Testis</tissue>
    </source>
</reference>
<name>ANR44_MOUSE</name>